<keyword id="KW-0169">Cobalamin biosynthesis</keyword>
<keyword id="KW-0315">Glutamine amidotransferase</keyword>
<keyword id="KW-1185">Reference proteome</keyword>
<accession>O26880</accession>
<protein>
    <recommendedName>
        <fullName>Probable cobyric acid synthase</fullName>
    </recommendedName>
</protein>
<organism>
    <name type="scientific">Methanothermobacter thermautotrophicus (strain ATCC 29096 / DSM 1053 / JCM 10044 / NBRC 100330 / Delta H)</name>
    <name type="common">Methanobacterium thermoautotrophicum</name>
    <dbReference type="NCBI Taxonomy" id="187420"/>
    <lineage>
        <taxon>Archaea</taxon>
        <taxon>Methanobacteriati</taxon>
        <taxon>Methanobacteriota</taxon>
        <taxon>Methanomada group</taxon>
        <taxon>Methanobacteria</taxon>
        <taxon>Methanobacteriales</taxon>
        <taxon>Methanobacteriaceae</taxon>
        <taxon>Methanothermobacter</taxon>
    </lineage>
</organism>
<proteinExistence type="inferred from homology"/>
<feature type="chain" id="PRO_0000141352" description="Probable cobyric acid synthase">
    <location>
        <begin position="1"/>
        <end position="504"/>
    </location>
</feature>
<feature type="domain" description="GATase cobBQ-type">
    <location>
        <begin position="252"/>
        <end position="450"/>
    </location>
</feature>
<feature type="active site" description="Nucleophile" evidence="1">
    <location>
        <position position="332"/>
    </location>
</feature>
<feature type="active site" evidence="1">
    <location>
        <position position="442"/>
    </location>
</feature>
<evidence type="ECO:0000250" key="1"/>
<evidence type="ECO:0000305" key="2"/>
<reference key="1">
    <citation type="journal article" date="1997" name="J. Bacteriol.">
        <title>Complete genome sequence of Methanobacterium thermoautotrophicum deltaH: functional analysis and comparative genomics.</title>
        <authorList>
            <person name="Smith D.R."/>
            <person name="Doucette-Stamm L.A."/>
            <person name="Deloughery C."/>
            <person name="Lee H.-M."/>
            <person name="Dubois J."/>
            <person name="Aldredge T."/>
            <person name="Bashirzadeh R."/>
            <person name="Blakely D."/>
            <person name="Cook R."/>
            <person name="Gilbert K."/>
            <person name="Harrison D."/>
            <person name="Hoang L."/>
            <person name="Keagle P."/>
            <person name="Lumm W."/>
            <person name="Pothier B."/>
            <person name="Qiu D."/>
            <person name="Spadafora R."/>
            <person name="Vicare R."/>
            <person name="Wang Y."/>
            <person name="Wierzbowski J."/>
            <person name="Gibson R."/>
            <person name="Jiwani N."/>
            <person name="Caruso A."/>
            <person name="Bush D."/>
            <person name="Safer H."/>
            <person name="Patwell D."/>
            <person name="Prabhakar S."/>
            <person name="McDougall S."/>
            <person name="Shimer G."/>
            <person name="Goyal A."/>
            <person name="Pietrovski S."/>
            <person name="Church G.M."/>
            <person name="Daniels C.J."/>
            <person name="Mao J.-I."/>
            <person name="Rice P."/>
            <person name="Noelling J."/>
            <person name="Reeve J.N."/>
        </authorList>
    </citation>
    <scope>NUCLEOTIDE SEQUENCE [LARGE SCALE GENOMIC DNA]</scope>
    <source>
        <strain>ATCC 29096 / DSM 1053 / JCM 10044 / NBRC 100330 / Delta H</strain>
    </source>
</reference>
<sequence length="504" mass="55831">MSAKCIMVQGTSSSAGKSVMVAALCRIFSRRGYRVAPFKSQNMSLNSFTTAENREIAVAQVLQAEAAGIEPSHHMNPVLLKPKEDFTSQVIVHGRPAGNMNFQDYQTEFRDTALEAIRESLEYLKSRYELIVIEGAGSPAEINMRDRDLANMEIAHLADADVILVADIDRGGVFASIAGTLMLLDERDRSRIKGVVINKFRGNIDILMPGIERIEEITGVPVLGVLPYDEGLKLPEEDSASLSQRKYRGRGDIRVGVMRLPRISNFTDIDPLEYEEDVAVRLIETGDSLDDLDAIIIPGTRNTISDLIHLEENGFADEIRDLSREIPVFGICGGFQMLGKRILDDARQESSEGSVDGLGLLDCETHFTGEGKIISQSQGRVLGNGIFSGMRGETVEGYELHEGTTVLGDVKPLLRVDRGFGNTRSGGFDGAVDGNVAGTYFHGIFHNFRFRRYFTNLLRERKGIEPLEYLDDNFSASRRFSIDRLAEIVEENMDLSIIEEILEG</sequence>
<name>COBQ_METTH</name>
<dbReference type="EMBL" id="AE000666">
    <property type="protein sequence ID" value="AAB85289.1"/>
    <property type="status" value="ALT_INIT"/>
    <property type="molecule type" value="Genomic_DNA"/>
</dbReference>
<dbReference type="PIR" id="B69205">
    <property type="entry name" value="B69205"/>
</dbReference>
<dbReference type="RefSeq" id="WP_048061247.1">
    <property type="nucleotide sequence ID" value="NC_000916.1"/>
</dbReference>
<dbReference type="SMR" id="O26880"/>
<dbReference type="FunCoup" id="O26880">
    <property type="interactions" value="90"/>
</dbReference>
<dbReference type="STRING" id="187420.MTH_787"/>
<dbReference type="PaxDb" id="187420-MTH_787"/>
<dbReference type="EnsemblBacteria" id="AAB85289">
    <property type="protein sequence ID" value="AAB85289"/>
    <property type="gene ID" value="MTH_787"/>
</dbReference>
<dbReference type="GeneID" id="1471195"/>
<dbReference type="GeneID" id="77401322"/>
<dbReference type="KEGG" id="mth:MTH_787"/>
<dbReference type="PATRIC" id="fig|187420.15.peg.774"/>
<dbReference type="HOGENOM" id="CLU_019250_2_2_2"/>
<dbReference type="InParanoid" id="O26880"/>
<dbReference type="UniPathway" id="UPA00148"/>
<dbReference type="Proteomes" id="UP000005223">
    <property type="component" value="Chromosome"/>
</dbReference>
<dbReference type="GO" id="GO:0015420">
    <property type="term" value="F:ABC-type vitamin B12 transporter activity"/>
    <property type="evidence" value="ECO:0007669"/>
    <property type="project" value="UniProtKB-UniRule"/>
</dbReference>
<dbReference type="GO" id="GO:0003824">
    <property type="term" value="F:catalytic activity"/>
    <property type="evidence" value="ECO:0007669"/>
    <property type="project" value="InterPro"/>
</dbReference>
<dbReference type="GO" id="GO:0009236">
    <property type="term" value="P:cobalamin biosynthetic process"/>
    <property type="evidence" value="ECO:0007669"/>
    <property type="project" value="UniProtKB-UniRule"/>
</dbReference>
<dbReference type="CDD" id="cd05389">
    <property type="entry name" value="CobQ_N"/>
    <property type="match status" value="1"/>
</dbReference>
<dbReference type="CDD" id="cd01750">
    <property type="entry name" value="GATase1_CobQ"/>
    <property type="match status" value="1"/>
</dbReference>
<dbReference type="Gene3D" id="3.40.50.880">
    <property type="match status" value="1"/>
</dbReference>
<dbReference type="Gene3D" id="3.40.50.300">
    <property type="entry name" value="P-loop containing nucleotide triphosphate hydrolases"/>
    <property type="match status" value="1"/>
</dbReference>
<dbReference type="HAMAP" id="MF_00028">
    <property type="entry name" value="CobQ"/>
    <property type="match status" value="1"/>
</dbReference>
<dbReference type="InterPro" id="IPR029062">
    <property type="entry name" value="Class_I_gatase-like"/>
</dbReference>
<dbReference type="InterPro" id="IPR002586">
    <property type="entry name" value="CobQ/CobB/MinD/ParA_Nub-bd_dom"/>
</dbReference>
<dbReference type="InterPro" id="IPR033949">
    <property type="entry name" value="CobQ_GATase1"/>
</dbReference>
<dbReference type="InterPro" id="IPR047045">
    <property type="entry name" value="CobQ_N"/>
</dbReference>
<dbReference type="InterPro" id="IPR004459">
    <property type="entry name" value="CobQ_synth"/>
</dbReference>
<dbReference type="InterPro" id="IPR011698">
    <property type="entry name" value="GATase_3"/>
</dbReference>
<dbReference type="InterPro" id="IPR027417">
    <property type="entry name" value="P-loop_NTPase"/>
</dbReference>
<dbReference type="NCBIfam" id="TIGR00313">
    <property type="entry name" value="cobQ"/>
    <property type="match status" value="1"/>
</dbReference>
<dbReference type="NCBIfam" id="NF001989">
    <property type="entry name" value="PRK00784.1"/>
    <property type="match status" value="1"/>
</dbReference>
<dbReference type="PANTHER" id="PTHR21343:SF1">
    <property type="entry name" value="COBYRIC ACID SYNTHASE"/>
    <property type="match status" value="1"/>
</dbReference>
<dbReference type="PANTHER" id="PTHR21343">
    <property type="entry name" value="DETHIOBIOTIN SYNTHETASE"/>
    <property type="match status" value="1"/>
</dbReference>
<dbReference type="Pfam" id="PF01656">
    <property type="entry name" value="CbiA"/>
    <property type="match status" value="1"/>
</dbReference>
<dbReference type="Pfam" id="PF07685">
    <property type="entry name" value="GATase_3"/>
    <property type="match status" value="1"/>
</dbReference>
<dbReference type="SUPFAM" id="SSF52317">
    <property type="entry name" value="Class I glutamine amidotransferase-like"/>
    <property type="match status" value="1"/>
</dbReference>
<dbReference type="SUPFAM" id="SSF52540">
    <property type="entry name" value="P-loop containing nucleoside triphosphate hydrolases"/>
    <property type="match status" value="1"/>
</dbReference>
<dbReference type="PROSITE" id="PS51274">
    <property type="entry name" value="GATASE_COBBQ"/>
    <property type="match status" value="1"/>
</dbReference>
<gene>
    <name type="primary">cobQ</name>
    <name type="ordered locus">MTH_787</name>
</gene>
<comment type="function">
    <text evidence="1">Catalyzes amidations at positions B, D, E, and G on adenosylcobyrinic A,C-diamide. NH(2) groups are provided by glutamine, and one molecule of ATP is hydrogenolyzed for each amidation (By similarity).</text>
</comment>
<comment type="pathway">
    <text>Cofactor biosynthesis; adenosylcobalamin biosynthesis.</text>
</comment>
<comment type="similarity">
    <text evidence="2">Belongs to the CobB/CobQ family. CobQ subfamily.</text>
</comment>
<comment type="sequence caution" evidence="2">
    <conflict type="erroneous initiation">
        <sequence resource="EMBL-CDS" id="AAB85289"/>
    </conflict>
</comment>